<keyword id="KW-0028">Amino-acid biosynthesis</keyword>
<keyword id="KW-0057">Aromatic amino acid biosynthesis</keyword>
<keyword id="KW-0963">Cytoplasm</keyword>
<keyword id="KW-0808">Transferase</keyword>
<evidence type="ECO:0000255" key="1">
    <source>
        <dbReference type="HAMAP-Rule" id="MF_00210"/>
    </source>
</evidence>
<protein>
    <recommendedName>
        <fullName evidence="1">3-phosphoshikimate 1-carboxyvinyltransferase</fullName>
        <ecNumber evidence="1">2.5.1.19</ecNumber>
    </recommendedName>
    <alternativeName>
        <fullName evidence="1">5-enolpyruvylshikimate-3-phosphate synthase</fullName>
        <shortName evidence="1">EPSP synthase</shortName>
        <shortName evidence="1">EPSPS</shortName>
    </alternativeName>
</protein>
<gene>
    <name evidence="1" type="primary">aroA</name>
    <name type="ordered locus">BPP3130</name>
</gene>
<feature type="chain" id="PRO_1000012413" description="3-phosphoshikimate 1-carboxyvinyltransferase">
    <location>
        <begin position="1"/>
        <end position="442"/>
    </location>
</feature>
<feature type="active site" description="Proton acceptor" evidence="1">
    <location>
        <position position="325"/>
    </location>
</feature>
<feature type="binding site" evidence="1">
    <location>
        <position position="25"/>
    </location>
    <ligand>
        <name>3-phosphoshikimate</name>
        <dbReference type="ChEBI" id="CHEBI:145989"/>
    </ligand>
</feature>
<feature type="binding site" evidence="1">
    <location>
        <position position="25"/>
    </location>
    <ligand>
        <name>phosphoenolpyruvate</name>
        <dbReference type="ChEBI" id="CHEBI:58702"/>
    </ligand>
</feature>
<feature type="binding site" evidence="1">
    <location>
        <position position="26"/>
    </location>
    <ligand>
        <name>3-phosphoshikimate</name>
        <dbReference type="ChEBI" id="CHEBI:145989"/>
    </ligand>
</feature>
<feature type="binding site" evidence="1">
    <location>
        <position position="30"/>
    </location>
    <ligand>
        <name>3-phosphoshikimate</name>
        <dbReference type="ChEBI" id="CHEBI:145989"/>
    </ligand>
</feature>
<feature type="binding site" evidence="1">
    <location>
        <position position="96"/>
    </location>
    <ligand>
        <name>phosphoenolpyruvate</name>
        <dbReference type="ChEBI" id="CHEBI:58702"/>
    </ligand>
</feature>
<feature type="binding site" evidence="1">
    <location>
        <position position="124"/>
    </location>
    <ligand>
        <name>phosphoenolpyruvate</name>
        <dbReference type="ChEBI" id="CHEBI:58702"/>
    </ligand>
</feature>
<feature type="binding site" evidence="1">
    <location>
        <position position="171"/>
    </location>
    <ligand>
        <name>3-phosphoshikimate</name>
        <dbReference type="ChEBI" id="CHEBI:145989"/>
    </ligand>
</feature>
<feature type="binding site" evidence="1">
    <location>
        <position position="172"/>
    </location>
    <ligand>
        <name>3-phosphoshikimate</name>
        <dbReference type="ChEBI" id="CHEBI:145989"/>
    </ligand>
</feature>
<feature type="binding site" evidence="1">
    <location>
        <position position="173"/>
    </location>
    <ligand>
        <name>3-phosphoshikimate</name>
        <dbReference type="ChEBI" id="CHEBI:145989"/>
    </ligand>
</feature>
<feature type="binding site" evidence="1">
    <location>
        <position position="173"/>
    </location>
    <ligand>
        <name>phosphoenolpyruvate</name>
        <dbReference type="ChEBI" id="CHEBI:58702"/>
    </ligand>
</feature>
<feature type="binding site" evidence="1">
    <location>
        <position position="203"/>
    </location>
    <ligand>
        <name>3-phosphoshikimate</name>
        <dbReference type="ChEBI" id="CHEBI:145989"/>
    </ligand>
</feature>
<feature type="binding site" evidence="1">
    <location>
        <position position="325"/>
    </location>
    <ligand>
        <name>3-phosphoshikimate</name>
        <dbReference type="ChEBI" id="CHEBI:145989"/>
    </ligand>
</feature>
<feature type="binding site" evidence="1">
    <location>
        <position position="352"/>
    </location>
    <ligand>
        <name>3-phosphoshikimate</name>
        <dbReference type="ChEBI" id="CHEBI:145989"/>
    </ligand>
</feature>
<feature type="binding site" evidence="1">
    <location>
        <position position="356"/>
    </location>
    <ligand>
        <name>phosphoenolpyruvate</name>
        <dbReference type="ChEBI" id="CHEBI:58702"/>
    </ligand>
</feature>
<feature type="binding site" evidence="1">
    <location>
        <position position="400"/>
    </location>
    <ligand>
        <name>phosphoenolpyruvate</name>
        <dbReference type="ChEBI" id="CHEBI:58702"/>
    </ligand>
</feature>
<feature type="binding site" evidence="1">
    <location>
        <position position="425"/>
    </location>
    <ligand>
        <name>phosphoenolpyruvate</name>
        <dbReference type="ChEBI" id="CHEBI:58702"/>
    </ligand>
</feature>
<dbReference type="EC" id="2.5.1.19" evidence="1"/>
<dbReference type="EMBL" id="BX640432">
    <property type="protein sequence ID" value="CAE38415.1"/>
    <property type="molecule type" value="Genomic_DNA"/>
</dbReference>
<dbReference type="RefSeq" id="WP_010928908.1">
    <property type="nucleotide sequence ID" value="NC_002928.3"/>
</dbReference>
<dbReference type="SMR" id="Q7W602"/>
<dbReference type="GeneID" id="93204911"/>
<dbReference type="KEGG" id="bpa:BPP3130"/>
<dbReference type="HOGENOM" id="CLU_024321_0_0_4"/>
<dbReference type="UniPathway" id="UPA00053">
    <property type="reaction ID" value="UER00089"/>
</dbReference>
<dbReference type="Proteomes" id="UP000001421">
    <property type="component" value="Chromosome"/>
</dbReference>
<dbReference type="GO" id="GO:0005737">
    <property type="term" value="C:cytoplasm"/>
    <property type="evidence" value="ECO:0007669"/>
    <property type="project" value="UniProtKB-SubCell"/>
</dbReference>
<dbReference type="GO" id="GO:0003866">
    <property type="term" value="F:3-phosphoshikimate 1-carboxyvinyltransferase activity"/>
    <property type="evidence" value="ECO:0007669"/>
    <property type="project" value="UniProtKB-UniRule"/>
</dbReference>
<dbReference type="GO" id="GO:0008652">
    <property type="term" value="P:amino acid biosynthetic process"/>
    <property type="evidence" value="ECO:0007669"/>
    <property type="project" value="UniProtKB-KW"/>
</dbReference>
<dbReference type="GO" id="GO:0009073">
    <property type="term" value="P:aromatic amino acid family biosynthetic process"/>
    <property type="evidence" value="ECO:0007669"/>
    <property type="project" value="UniProtKB-KW"/>
</dbReference>
<dbReference type="GO" id="GO:0009423">
    <property type="term" value="P:chorismate biosynthetic process"/>
    <property type="evidence" value="ECO:0007669"/>
    <property type="project" value="UniProtKB-UniRule"/>
</dbReference>
<dbReference type="CDD" id="cd01556">
    <property type="entry name" value="EPSP_synthase"/>
    <property type="match status" value="1"/>
</dbReference>
<dbReference type="FunFam" id="3.65.10.10:FF:000004">
    <property type="entry name" value="3-phosphoshikimate 1-carboxyvinyltransferase"/>
    <property type="match status" value="1"/>
</dbReference>
<dbReference type="Gene3D" id="3.65.10.10">
    <property type="entry name" value="Enolpyruvate transferase domain"/>
    <property type="match status" value="2"/>
</dbReference>
<dbReference type="HAMAP" id="MF_00210">
    <property type="entry name" value="EPSP_synth"/>
    <property type="match status" value="1"/>
</dbReference>
<dbReference type="InterPro" id="IPR001986">
    <property type="entry name" value="Enolpyruvate_Tfrase_dom"/>
</dbReference>
<dbReference type="InterPro" id="IPR036968">
    <property type="entry name" value="Enolpyruvate_Tfrase_sf"/>
</dbReference>
<dbReference type="InterPro" id="IPR006264">
    <property type="entry name" value="EPSP_synthase"/>
</dbReference>
<dbReference type="InterPro" id="IPR023193">
    <property type="entry name" value="EPSP_synthase_CS"/>
</dbReference>
<dbReference type="InterPro" id="IPR013792">
    <property type="entry name" value="RNA3'P_cycl/enolpyr_Trfase_a/b"/>
</dbReference>
<dbReference type="NCBIfam" id="TIGR01356">
    <property type="entry name" value="aroA"/>
    <property type="match status" value="1"/>
</dbReference>
<dbReference type="PANTHER" id="PTHR21090">
    <property type="entry name" value="AROM/DEHYDROQUINATE SYNTHASE"/>
    <property type="match status" value="1"/>
</dbReference>
<dbReference type="PANTHER" id="PTHR21090:SF5">
    <property type="entry name" value="PENTAFUNCTIONAL AROM POLYPEPTIDE"/>
    <property type="match status" value="1"/>
</dbReference>
<dbReference type="Pfam" id="PF00275">
    <property type="entry name" value="EPSP_synthase"/>
    <property type="match status" value="1"/>
</dbReference>
<dbReference type="PIRSF" id="PIRSF000505">
    <property type="entry name" value="EPSPS"/>
    <property type="match status" value="1"/>
</dbReference>
<dbReference type="SUPFAM" id="SSF55205">
    <property type="entry name" value="EPT/RTPC-like"/>
    <property type="match status" value="1"/>
</dbReference>
<dbReference type="PROSITE" id="PS00104">
    <property type="entry name" value="EPSP_SYNTHASE_1"/>
    <property type="match status" value="1"/>
</dbReference>
<dbReference type="PROSITE" id="PS00885">
    <property type="entry name" value="EPSP_SYNTHASE_2"/>
    <property type="match status" value="1"/>
</dbReference>
<accession>Q7W602</accession>
<name>AROA_BORPA</name>
<proteinExistence type="inferred from homology"/>
<sequence length="442" mass="46588">MSGLAYLDLPAARLARGEVALPGSKSISNRVLLLAALAEGSTEITGLLDSDDTRVMLAALRQLGVSVGEVADGCVTIEGVARFPIEQAELFLGNAGTAFRPLTAALALMGGDYRLSGVPRMHERPIGDLVDALRQFGAGIEYLGQAGYPPLRIGGGSIRVDGPVRVEGSVSSQFLTALLMAAPVLARRSGQDITIEVVGELISKPYIEITLNLMARFGVSVRRDGWRAFTIARDAAYRGPGRMAIEGDASTASYFLALGAIGGGPVRVTGVGEDSIQGDVAFAATLAAMGADVRYGPGWIETRGVRVAEGGRLKAFDADFNLIPDAAMTAATLALYADGPCRLRNIGSWRVKETDRIHAMHTELEKLGAGVQSGADWLEVAPPAPGGWRDAHIGTWDDHRMAMCFSLAAFGPAAVRILDPGCVSKTFPDYFDVYAGLLAARD</sequence>
<organism>
    <name type="scientific">Bordetella parapertussis (strain 12822 / ATCC BAA-587 / NCTC 13253)</name>
    <dbReference type="NCBI Taxonomy" id="257311"/>
    <lineage>
        <taxon>Bacteria</taxon>
        <taxon>Pseudomonadati</taxon>
        <taxon>Pseudomonadota</taxon>
        <taxon>Betaproteobacteria</taxon>
        <taxon>Burkholderiales</taxon>
        <taxon>Alcaligenaceae</taxon>
        <taxon>Bordetella</taxon>
    </lineage>
</organism>
<comment type="function">
    <text evidence="1">Catalyzes the transfer of the enolpyruvyl moiety of phosphoenolpyruvate (PEP) to the 5-hydroxyl of shikimate-3-phosphate (S3P) to produce enolpyruvyl shikimate-3-phosphate and inorganic phosphate.</text>
</comment>
<comment type="catalytic activity">
    <reaction evidence="1">
        <text>3-phosphoshikimate + phosphoenolpyruvate = 5-O-(1-carboxyvinyl)-3-phosphoshikimate + phosphate</text>
        <dbReference type="Rhea" id="RHEA:21256"/>
        <dbReference type="ChEBI" id="CHEBI:43474"/>
        <dbReference type="ChEBI" id="CHEBI:57701"/>
        <dbReference type="ChEBI" id="CHEBI:58702"/>
        <dbReference type="ChEBI" id="CHEBI:145989"/>
        <dbReference type="EC" id="2.5.1.19"/>
    </reaction>
    <physiologicalReaction direction="left-to-right" evidence="1">
        <dbReference type="Rhea" id="RHEA:21257"/>
    </physiologicalReaction>
</comment>
<comment type="pathway">
    <text evidence="1">Metabolic intermediate biosynthesis; chorismate biosynthesis; chorismate from D-erythrose 4-phosphate and phosphoenolpyruvate: step 6/7.</text>
</comment>
<comment type="subunit">
    <text evidence="1">Monomer.</text>
</comment>
<comment type="subcellular location">
    <subcellularLocation>
        <location evidence="1">Cytoplasm</location>
    </subcellularLocation>
</comment>
<comment type="similarity">
    <text evidence="1">Belongs to the EPSP synthase family.</text>
</comment>
<reference key="1">
    <citation type="journal article" date="2003" name="Nat. Genet.">
        <title>Comparative analysis of the genome sequences of Bordetella pertussis, Bordetella parapertussis and Bordetella bronchiseptica.</title>
        <authorList>
            <person name="Parkhill J."/>
            <person name="Sebaihia M."/>
            <person name="Preston A."/>
            <person name="Murphy L.D."/>
            <person name="Thomson N.R."/>
            <person name="Harris D.E."/>
            <person name="Holden M.T.G."/>
            <person name="Churcher C.M."/>
            <person name="Bentley S.D."/>
            <person name="Mungall K.L."/>
            <person name="Cerdeno-Tarraga A.-M."/>
            <person name="Temple L."/>
            <person name="James K.D."/>
            <person name="Harris B."/>
            <person name="Quail M.A."/>
            <person name="Achtman M."/>
            <person name="Atkin R."/>
            <person name="Baker S."/>
            <person name="Basham D."/>
            <person name="Bason N."/>
            <person name="Cherevach I."/>
            <person name="Chillingworth T."/>
            <person name="Collins M."/>
            <person name="Cronin A."/>
            <person name="Davis P."/>
            <person name="Doggett J."/>
            <person name="Feltwell T."/>
            <person name="Goble A."/>
            <person name="Hamlin N."/>
            <person name="Hauser H."/>
            <person name="Holroyd S."/>
            <person name="Jagels K."/>
            <person name="Leather S."/>
            <person name="Moule S."/>
            <person name="Norberczak H."/>
            <person name="O'Neil S."/>
            <person name="Ormond D."/>
            <person name="Price C."/>
            <person name="Rabbinowitsch E."/>
            <person name="Rutter S."/>
            <person name="Sanders M."/>
            <person name="Saunders D."/>
            <person name="Seeger K."/>
            <person name="Sharp S."/>
            <person name="Simmonds M."/>
            <person name="Skelton J."/>
            <person name="Squares R."/>
            <person name="Squares S."/>
            <person name="Stevens K."/>
            <person name="Unwin L."/>
            <person name="Whitehead S."/>
            <person name="Barrell B.G."/>
            <person name="Maskell D.J."/>
        </authorList>
    </citation>
    <scope>NUCLEOTIDE SEQUENCE [LARGE SCALE GENOMIC DNA]</scope>
    <source>
        <strain>12822 / ATCC BAA-587 / NCTC 13253</strain>
    </source>
</reference>